<comment type="function">
    <text evidence="1">Catalyzes the base-exchange of a guanine (G) residue with the queuine precursor 7-aminomethyl-7-deazaguanine (PreQ1) at position 34 (anticodon wobble position) in tRNAs with GU(N) anticodons (tRNA-Asp, -Asn, -His and -Tyr). Catalysis occurs through a double-displacement mechanism. The nucleophile active site attacks the C1' of nucleotide 34 to detach the guanine base from the RNA, forming a covalent enzyme-RNA intermediate. The proton acceptor active site deprotonates the incoming PreQ1, allowing a nucleophilic attack on the C1' of the ribose to form the product. After dissociation, two additional enzymatic reactions on the tRNA convert PreQ1 to queuine (Q), resulting in the hypermodified nucleoside queuosine (7-(((4,5-cis-dihydroxy-2-cyclopenten-1-yl)amino)methyl)-7-deazaguanosine).</text>
</comment>
<comment type="catalytic activity">
    <reaction evidence="1">
        <text>7-aminomethyl-7-carbaguanine + guanosine(34) in tRNA = 7-aminomethyl-7-carbaguanosine(34) in tRNA + guanine</text>
        <dbReference type="Rhea" id="RHEA:24104"/>
        <dbReference type="Rhea" id="RHEA-COMP:10341"/>
        <dbReference type="Rhea" id="RHEA-COMP:10342"/>
        <dbReference type="ChEBI" id="CHEBI:16235"/>
        <dbReference type="ChEBI" id="CHEBI:58703"/>
        <dbReference type="ChEBI" id="CHEBI:74269"/>
        <dbReference type="ChEBI" id="CHEBI:82833"/>
        <dbReference type="EC" id="2.4.2.29"/>
    </reaction>
</comment>
<comment type="cofactor">
    <cofactor evidence="1">
        <name>Zn(2+)</name>
        <dbReference type="ChEBI" id="CHEBI:29105"/>
    </cofactor>
    <text evidence="1">Binds 1 zinc ion per subunit.</text>
</comment>
<comment type="pathway">
    <text evidence="1">tRNA modification; tRNA-queuosine biosynthesis.</text>
</comment>
<comment type="subunit">
    <text evidence="1">Homodimer. Within each dimer, one monomer is responsible for RNA recognition and catalysis, while the other monomer binds to the replacement base PreQ1.</text>
</comment>
<comment type="similarity">
    <text evidence="1">Belongs to the queuine tRNA-ribosyltransferase family.</text>
</comment>
<sequence>MSMSFSFQVEATQGAARAGRMITPHGEVETPVFMPVGTVATVKGIPQDLLEELGVQILLNNTYHLYLRPGVEQIRKLGGTHKFMSWDRSILTDSGGFQVFSLSELRKVTEEGVSFRSHLDGSSHLFSPESAMASQIGIGADIIMAFDECTEYPAERTRTERSMELTLRWAERSKNAFEAHKHEVPWFAERGKKSQALFGIVQGGMFPNLRKESAERTVEIGFPGYALGGFSVGEPREKTAELVANTVPLLPENKPRYLMGVGYPEEIVQYARMGIDMMDCVLPTRAARHGLLFTSEGRLTIKNQRFASDEGPLDPNCSCKVCKRYSRAYLRHLYASNEVLAQVLNTTHNLSYYLDTMRRVRQAIILGENSVSLPVVRSPHLSAT</sequence>
<dbReference type="EC" id="2.4.2.29" evidence="1"/>
<dbReference type="EMBL" id="CP000360">
    <property type="protein sequence ID" value="ABF39149.1"/>
    <property type="molecule type" value="Genomic_DNA"/>
</dbReference>
<dbReference type="RefSeq" id="WP_011520951.1">
    <property type="nucleotide sequence ID" value="NC_008009.1"/>
</dbReference>
<dbReference type="SMR" id="Q1IVF1"/>
<dbReference type="STRING" id="204669.Acid345_0144"/>
<dbReference type="EnsemblBacteria" id="ABF39149">
    <property type="protein sequence ID" value="ABF39149"/>
    <property type="gene ID" value="Acid345_0144"/>
</dbReference>
<dbReference type="KEGG" id="aba:Acid345_0144"/>
<dbReference type="eggNOG" id="COG0343">
    <property type="taxonomic scope" value="Bacteria"/>
</dbReference>
<dbReference type="HOGENOM" id="CLU_022060_0_1_0"/>
<dbReference type="OrthoDB" id="9805417at2"/>
<dbReference type="UniPathway" id="UPA00392"/>
<dbReference type="Proteomes" id="UP000002432">
    <property type="component" value="Chromosome"/>
</dbReference>
<dbReference type="GO" id="GO:0005829">
    <property type="term" value="C:cytosol"/>
    <property type="evidence" value="ECO:0007669"/>
    <property type="project" value="TreeGrafter"/>
</dbReference>
<dbReference type="GO" id="GO:0046872">
    <property type="term" value="F:metal ion binding"/>
    <property type="evidence" value="ECO:0007669"/>
    <property type="project" value="UniProtKB-KW"/>
</dbReference>
<dbReference type="GO" id="GO:0008479">
    <property type="term" value="F:tRNA-guanosine(34) queuine transglycosylase activity"/>
    <property type="evidence" value="ECO:0007669"/>
    <property type="project" value="UniProtKB-UniRule"/>
</dbReference>
<dbReference type="GO" id="GO:0008616">
    <property type="term" value="P:queuosine biosynthetic process"/>
    <property type="evidence" value="ECO:0007669"/>
    <property type="project" value="UniProtKB-UniRule"/>
</dbReference>
<dbReference type="GO" id="GO:0002099">
    <property type="term" value="P:tRNA wobble guanine modification"/>
    <property type="evidence" value="ECO:0007669"/>
    <property type="project" value="TreeGrafter"/>
</dbReference>
<dbReference type="GO" id="GO:0101030">
    <property type="term" value="P:tRNA-guanine transglycosylation"/>
    <property type="evidence" value="ECO:0007669"/>
    <property type="project" value="InterPro"/>
</dbReference>
<dbReference type="FunFam" id="3.20.20.105:FF:000001">
    <property type="entry name" value="Queuine tRNA-ribosyltransferase"/>
    <property type="match status" value="1"/>
</dbReference>
<dbReference type="Gene3D" id="3.20.20.105">
    <property type="entry name" value="Queuine tRNA-ribosyltransferase-like"/>
    <property type="match status" value="1"/>
</dbReference>
<dbReference type="HAMAP" id="MF_00168">
    <property type="entry name" value="Q_tRNA_Tgt"/>
    <property type="match status" value="1"/>
</dbReference>
<dbReference type="InterPro" id="IPR050076">
    <property type="entry name" value="ArchSynthase1/Queuine_TRR"/>
</dbReference>
<dbReference type="InterPro" id="IPR004803">
    <property type="entry name" value="TGT"/>
</dbReference>
<dbReference type="InterPro" id="IPR036511">
    <property type="entry name" value="TGT-like_sf"/>
</dbReference>
<dbReference type="InterPro" id="IPR002616">
    <property type="entry name" value="tRNA_ribo_trans-like"/>
</dbReference>
<dbReference type="NCBIfam" id="TIGR00430">
    <property type="entry name" value="Q_tRNA_tgt"/>
    <property type="match status" value="1"/>
</dbReference>
<dbReference type="NCBIfam" id="TIGR00449">
    <property type="entry name" value="tgt_general"/>
    <property type="match status" value="1"/>
</dbReference>
<dbReference type="PANTHER" id="PTHR46499">
    <property type="entry name" value="QUEUINE TRNA-RIBOSYLTRANSFERASE"/>
    <property type="match status" value="1"/>
</dbReference>
<dbReference type="PANTHER" id="PTHR46499:SF1">
    <property type="entry name" value="QUEUINE TRNA-RIBOSYLTRANSFERASE"/>
    <property type="match status" value="1"/>
</dbReference>
<dbReference type="Pfam" id="PF01702">
    <property type="entry name" value="TGT"/>
    <property type="match status" value="1"/>
</dbReference>
<dbReference type="SUPFAM" id="SSF51713">
    <property type="entry name" value="tRNA-guanine transglycosylase"/>
    <property type="match status" value="1"/>
</dbReference>
<organism>
    <name type="scientific">Koribacter versatilis (strain Ellin345)</name>
    <dbReference type="NCBI Taxonomy" id="204669"/>
    <lineage>
        <taxon>Bacteria</taxon>
        <taxon>Pseudomonadati</taxon>
        <taxon>Acidobacteriota</taxon>
        <taxon>Terriglobia</taxon>
        <taxon>Terriglobales</taxon>
        <taxon>Candidatus Korobacteraceae</taxon>
        <taxon>Candidatus Korobacter</taxon>
    </lineage>
</organism>
<accession>Q1IVF1</accession>
<keyword id="KW-0328">Glycosyltransferase</keyword>
<keyword id="KW-0479">Metal-binding</keyword>
<keyword id="KW-0671">Queuosine biosynthesis</keyword>
<keyword id="KW-1185">Reference proteome</keyword>
<keyword id="KW-0808">Transferase</keyword>
<keyword id="KW-0819">tRNA processing</keyword>
<keyword id="KW-0862">Zinc</keyword>
<name>TGT_KORVE</name>
<feature type="chain" id="PRO_1000197973" description="Queuine tRNA-ribosyltransferase">
    <location>
        <begin position="1"/>
        <end position="384"/>
    </location>
</feature>
<feature type="region of interest" description="RNA binding" evidence="1">
    <location>
        <begin position="260"/>
        <end position="266"/>
    </location>
</feature>
<feature type="region of interest" description="RNA binding; important for wobble base 34 recognition" evidence="1">
    <location>
        <begin position="284"/>
        <end position="288"/>
    </location>
</feature>
<feature type="active site" description="Proton acceptor" evidence="1">
    <location>
        <position position="93"/>
    </location>
</feature>
<feature type="active site" description="Nucleophile" evidence="1">
    <location>
        <position position="279"/>
    </location>
</feature>
<feature type="binding site" evidence="1">
    <location>
        <begin position="93"/>
        <end position="97"/>
    </location>
    <ligand>
        <name>substrate</name>
    </ligand>
</feature>
<feature type="binding site" evidence="1">
    <location>
        <position position="147"/>
    </location>
    <ligand>
        <name>substrate</name>
    </ligand>
</feature>
<feature type="binding site" evidence="1">
    <location>
        <position position="202"/>
    </location>
    <ligand>
        <name>substrate</name>
    </ligand>
</feature>
<feature type="binding site" evidence="1">
    <location>
        <position position="229"/>
    </location>
    <ligand>
        <name>substrate</name>
    </ligand>
</feature>
<feature type="binding site" evidence="1">
    <location>
        <position position="317"/>
    </location>
    <ligand>
        <name>Zn(2+)</name>
        <dbReference type="ChEBI" id="CHEBI:29105"/>
    </ligand>
</feature>
<feature type="binding site" evidence="1">
    <location>
        <position position="319"/>
    </location>
    <ligand>
        <name>Zn(2+)</name>
        <dbReference type="ChEBI" id="CHEBI:29105"/>
    </ligand>
</feature>
<feature type="binding site" evidence="1">
    <location>
        <position position="322"/>
    </location>
    <ligand>
        <name>Zn(2+)</name>
        <dbReference type="ChEBI" id="CHEBI:29105"/>
    </ligand>
</feature>
<feature type="binding site" evidence="1">
    <location>
        <position position="348"/>
    </location>
    <ligand>
        <name>Zn(2+)</name>
        <dbReference type="ChEBI" id="CHEBI:29105"/>
    </ligand>
</feature>
<protein>
    <recommendedName>
        <fullName evidence="1">Queuine tRNA-ribosyltransferase</fullName>
        <ecNumber evidence="1">2.4.2.29</ecNumber>
    </recommendedName>
    <alternativeName>
        <fullName evidence="1">Guanine insertion enzyme</fullName>
    </alternativeName>
    <alternativeName>
        <fullName evidence="1">tRNA-guanine transglycosylase</fullName>
    </alternativeName>
</protein>
<proteinExistence type="inferred from homology"/>
<reference key="1">
    <citation type="journal article" date="2009" name="Appl. Environ. Microbiol.">
        <title>Three genomes from the phylum Acidobacteria provide insight into the lifestyles of these microorganisms in soils.</title>
        <authorList>
            <person name="Ward N.L."/>
            <person name="Challacombe J.F."/>
            <person name="Janssen P.H."/>
            <person name="Henrissat B."/>
            <person name="Coutinho P.M."/>
            <person name="Wu M."/>
            <person name="Xie G."/>
            <person name="Haft D.H."/>
            <person name="Sait M."/>
            <person name="Badger J."/>
            <person name="Barabote R.D."/>
            <person name="Bradley B."/>
            <person name="Brettin T.S."/>
            <person name="Brinkac L.M."/>
            <person name="Bruce D."/>
            <person name="Creasy T."/>
            <person name="Daugherty S.C."/>
            <person name="Davidsen T.M."/>
            <person name="DeBoy R.T."/>
            <person name="Detter J.C."/>
            <person name="Dodson R.J."/>
            <person name="Durkin A.S."/>
            <person name="Ganapathy A."/>
            <person name="Gwinn-Giglio M."/>
            <person name="Han C.S."/>
            <person name="Khouri H."/>
            <person name="Kiss H."/>
            <person name="Kothari S.P."/>
            <person name="Madupu R."/>
            <person name="Nelson K.E."/>
            <person name="Nelson W.C."/>
            <person name="Paulsen I."/>
            <person name="Penn K."/>
            <person name="Ren Q."/>
            <person name="Rosovitz M.J."/>
            <person name="Selengut J.D."/>
            <person name="Shrivastava S."/>
            <person name="Sullivan S.A."/>
            <person name="Tapia R."/>
            <person name="Thompson L.S."/>
            <person name="Watkins K.L."/>
            <person name="Yang Q."/>
            <person name="Yu C."/>
            <person name="Zafar N."/>
            <person name="Zhou L."/>
            <person name="Kuske C.R."/>
        </authorList>
    </citation>
    <scope>NUCLEOTIDE SEQUENCE [LARGE SCALE GENOMIC DNA]</scope>
    <source>
        <strain>Ellin345</strain>
    </source>
</reference>
<evidence type="ECO:0000255" key="1">
    <source>
        <dbReference type="HAMAP-Rule" id="MF_00168"/>
    </source>
</evidence>
<gene>
    <name evidence="1" type="primary">tgt</name>
    <name type="ordered locus">Acid345_0144</name>
</gene>